<sequence>MVLSAADKSNVKAAWGKVGGHAADYGAEALERMFLSFPTTKTYFPHFDLSHGSAQVKGHGAKVANALTKAVGHLDDLPGALSELSDLHAHKLRVDPVNFKLLSHSLLVTLASHLPNDFTPAVHASLDKFLASVSTVLTSKYR</sequence>
<evidence type="ECO:0000255" key="1">
    <source>
        <dbReference type="PROSITE-ProRule" id="PRU00238"/>
    </source>
</evidence>
<name>HBA4_BUBBU</name>
<protein>
    <recommendedName>
        <fullName>Hemoglobin subunit alpha-4</fullName>
    </recommendedName>
    <alternativeName>
        <fullName>Alpha-4-globin</fullName>
    </alternativeName>
    <alternativeName>
        <fullName>Hemoglobin alpha-4 chain</fullName>
    </alternativeName>
    <alternativeName>
        <fullName>IIalpha4</fullName>
    </alternativeName>
</protein>
<proteinExistence type="evidence at transcript level"/>
<reference key="1">
    <citation type="journal article" date="2001" name="J. Protein Chem.">
        <title>Primary structure of alpha-globin chains from river buffalo (Bubalus bubalis L.) hemoglobins.</title>
        <authorList>
            <person name="Ferranti P."/>
            <person name="Facchiano A."/>
            <person name="Zappacosta F."/>
            <person name="Vincenti D."/>
            <person name="Rullo R."/>
            <person name="Masala B."/>
            <person name="Di Luccia A."/>
        </authorList>
    </citation>
    <scope>NUCLEOTIDE SEQUENCE [GENOMIC DNA]</scope>
    <source>
        <strain>Italy</strain>
    </source>
</reference>
<feature type="chain" id="PRO_0000052574" description="Hemoglobin subunit alpha-4">
    <location>
        <begin position="1"/>
        <end position="142"/>
    </location>
</feature>
<feature type="domain" description="Globin" evidence="1">
    <location>
        <begin position="2"/>
        <end position="142"/>
    </location>
</feature>
<feature type="binding site" evidence="1">
    <location>
        <position position="59"/>
    </location>
    <ligand>
        <name>O2</name>
        <dbReference type="ChEBI" id="CHEBI:15379"/>
    </ligand>
</feature>
<feature type="binding site" description="proximal binding residue" evidence="1">
    <location>
        <position position="88"/>
    </location>
    <ligand>
        <name>heme b</name>
        <dbReference type="ChEBI" id="CHEBI:60344"/>
    </ligand>
    <ligandPart>
        <name>Fe</name>
        <dbReference type="ChEBI" id="CHEBI:18248"/>
    </ligandPart>
</feature>
<keyword id="KW-0349">Heme</keyword>
<keyword id="KW-0408">Iron</keyword>
<keyword id="KW-0479">Metal-binding</keyword>
<keyword id="KW-0561">Oxygen transport</keyword>
<keyword id="KW-0813">Transport</keyword>
<comment type="function">
    <text>Involved in oxygen transport from the lung to the various peripheral tissues.</text>
</comment>
<comment type="subunit">
    <text>Heterotetramer of two alpha chains and two beta chains.</text>
</comment>
<comment type="tissue specificity">
    <text>Red blood cells.</text>
</comment>
<comment type="similarity">
    <text evidence="1">Belongs to the globin family.</text>
</comment>
<dbReference type="EMBL" id="AJ242734">
    <property type="protein sequence ID" value="CAB43765.1"/>
    <property type="molecule type" value="Genomic_DNA"/>
</dbReference>
<dbReference type="PIR" id="A58794">
    <property type="entry name" value="A58794"/>
</dbReference>
<dbReference type="RefSeq" id="XP_006050021.1">
    <property type="nucleotide sequence ID" value="XM_006049959.1"/>
</dbReference>
<dbReference type="SMR" id="Q9XSK1"/>
<dbReference type="GeneID" id="102398439"/>
<dbReference type="KEGG" id="bbub:102398439"/>
<dbReference type="CTD" id="3039"/>
<dbReference type="OrthoDB" id="8751793at2759"/>
<dbReference type="GO" id="GO:0072562">
    <property type="term" value="C:blood microparticle"/>
    <property type="evidence" value="ECO:0007669"/>
    <property type="project" value="TreeGrafter"/>
</dbReference>
<dbReference type="GO" id="GO:0031838">
    <property type="term" value="C:haptoglobin-hemoglobin complex"/>
    <property type="evidence" value="ECO:0007669"/>
    <property type="project" value="TreeGrafter"/>
</dbReference>
<dbReference type="GO" id="GO:0005833">
    <property type="term" value="C:hemoglobin complex"/>
    <property type="evidence" value="ECO:0007669"/>
    <property type="project" value="InterPro"/>
</dbReference>
<dbReference type="GO" id="GO:0031720">
    <property type="term" value="F:haptoglobin binding"/>
    <property type="evidence" value="ECO:0007669"/>
    <property type="project" value="TreeGrafter"/>
</dbReference>
<dbReference type="GO" id="GO:0020037">
    <property type="term" value="F:heme binding"/>
    <property type="evidence" value="ECO:0007669"/>
    <property type="project" value="InterPro"/>
</dbReference>
<dbReference type="GO" id="GO:0005506">
    <property type="term" value="F:iron ion binding"/>
    <property type="evidence" value="ECO:0007669"/>
    <property type="project" value="InterPro"/>
</dbReference>
<dbReference type="GO" id="GO:0043177">
    <property type="term" value="F:organic acid binding"/>
    <property type="evidence" value="ECO:0007669"/>
    <property type="project" value="TreeGrafter"/>
</dbReference>
<dbReference type="GO" id="GO:0019825">
    <property type="term" value="F:oxygen binding"/>
    <property type="evidence" value="ECO:0007669"/>
    <property type="project" value="InterPro"/>
</dbReference>
<dbReference type="GO" id="GO:0005344">
    <property type="term" value="F:oxygen carrier activity"/>
    <property type="evidence" value="ECO:0007669"/>
    <property type="project" value="UniProtKB-KW"/>
</dbReference>
<dbReference type="GO" id="GO:0004601">
    <property type="term" value="F:peroxidase activity"/>
    <property type="evidence" value="ECO:0007669"/>
    <property type="project" value="TreeGrafter"/>
</dbReference>
<dbReference type="GO" id="GO:0042744">
    <property type="term" value="P:hydrogen peroxide catabolic process"/>
    <property type="evidence" value="ECO:0007669"/>
    <property type="project" value="TreeGrafter"/>
</dbReference>
<dbReference type="CDD" id="cd08927">
    <property type="entry name" value="Hb-alpha-like"/>
    <property type="match status" value="1"/>
</dbReference>
<dbReference type="FunFam" id="1.10.490.10:FF:000002">
    <property type="entry name" value="Hemoglobin subunit alpha"/>
    <property type="match status" value="1"/>
</dbReference>
<dbReference type="Gene3D" id="1.10.490.10">
    <property type="entry name" value="Globins"/>
    <property type="match status" value="1"/>
</dbReference>
<dbReference type="InterPro" id="IPR000971">
    <property type="entry name" value="Globin"/>
</dbReference>
<dbReference type="InterPro" id="IPR009050">
    <property type="entry name" value="Globin-like_sf"/>
</dbReference>
<dbReference type="InterPro" id="IPR012292">
    <property type="entry name" value="Globin/Proto"/>
</dbReference>
<dbReference type="InterPro" id="IPR002338">
    <property type="entry name" value="Hemoglobin_a-typ"/>
</dbReference>
<dbReference type="InterPro" id="IPR050056">
    <property type="entry name" value="Hemoglobin_oxygen_transport"/>
</dbReference>
<dbReference type="InterPro" id="IPR002339">
    <property type="entry name" value="Hemoglobin_pi"/>
</dbReference>
<dbReference type="PANTHER" id="PTHR11442">
    <property type="entry name" value="HEMOGLOBIN FAMILY MEMBER"/>
    <property type="match status" value="1"/>
</dbReference>
<dbReference type="PANTHER" id="PTHR11442:SF48">
    <property type="entry name" value="HEMOGLOBIN SUBUNIT ALPHA"/>
    <property type="match status" value="1"/>
</dbReference>
<dbReference type="Pfam" id="PF00042">
    <property type="entry name" value="Globin"/>
    <property type="match status" value="1"/>
</dbReference>
<dbReference type="PRINTS" id="PR00612">
    <property type="entry name" value="ALPHAHAEM"/>
</dbReference>
<dbReference type="PRINTS" id="PR00815">
    <property type="entry name" value="PIHAEM"/>
</dbReference>
<dbReference type="SUPFAM" id="SSF46458">
    <property type="entry name" value="Globin-like"/>
    <property type="match status" value="1"/>
</dbReference>
<dbReference type="PROSITE" id="PS01033">
    <property type="entry name" value="GLOBIN"/>
    <property type="match status" value="1"/>
</dbReference>
<accession>Q9XSK1</accession>
<organism>
    <name type="scientific">Bubalus bubalis</name>
    <name type="common">Domestic water buffalo</name>
    <dbReference type="NCBI Taxonomy" id="89462"/>
    <lineage>
        <taxon>Eukaryota</taxon>
        <taxon>Metazoa</taxon>
        <taxon>Chordata</taxon>
        <taxon>Craniata</taxon>
        <taxon>Vertebrata</taxon>
        <taxon>Euteleostomi</taxon>
        <taxon>Mammalia</taxon>
        <taxon>Eutheria</taxon>
        <taxon>Laurasiatheria</taxon>
        <taxon>Artiodactyla</taxon>
        <taxon>Ruminantia</taxon>
        <taxon>Pecora</taxon>
        <taxon>Bovidae</taxon>
        <taxon>Bovinae</taxon>
        <taxon>Bubalus</taxon>
    </lineage>
</organism>